<accession>P45564</accession>
<comment type="similarity">
    <text evidence="1">Belongs to the nucleoside-specific channel-forming outer membrane porin (Tsx) (TC 1.B.10) family.</text>
</comment>
<protein>
    <recommendedName>
        <fullName>Uncharacterized protein YfeN</fullName>
    </recommendedName>
</protein>
<keyword id="KW-1185">Reference proteome</keyword>
<reference key="1">
    <citation type="journal article" date="1995" name="J. Bacteriol.">
        <title>Identification and characterization of genes (xapA, xapB, and xapR) involved in xanthosine catabolism in Escherichia coli.</title>
        <authorList>
            <person name="Seeger C."/>
            <person name="Poulsen C."/>
            <person name="Dandanell G."/>
        </authorList>
    </citation>
    <scope>NUCLEOTIDE SEQUENCE [GENOMIC DNA]</scope>
    <source>
        <strain>K12</strain>
    </source>
</reference>
<reference key="2">
    <citation type="journal article" date="1997" name="DNA Res.">
        <title>Construction of a contiguous 874-kb sequence of the Escherichia coli-K12 genome corresponding to 50.0-68.8 min on the linkage map and analysis of its sequence features.</title>
        <authorList>
            <person name="Yamamoto Y."/>
            <person name="Aiba H."/>
            <person name="Baba T."/>
            <person name="Hayashi K."/>
            <person name="Inada T."/>
            <person name="Isono K."/>
            <person name="Itoh T."/>
            <person name="Kimura S."/>
            <person name="Kitagawa M."/>
            <person name="Makino K."/>
            <person name="Miki T."/>
            <person name="Mitsuhashi N."/>
            <person name="Mizobuchi K."/>
            <person name="Mori H."/>
            <person name="Nakade S."/>
            <person name="Nakamura Y."/>
            <person name="Nashimoto H."/>
            <person name="Oshima T."/>
            <person name="Oyama S."/>
            <person name="Saito N."/>
            <person name="Sampei G."/>
            <person name="Satoh Y."/>
            <person name="Sivasundaram S."/>
            <person name="Tagami H."/>
            <person name="Takahashi H."/>
            <person name="Takeda J."/>
            <person name="Takemoto K."/>
            <person name="Uehara K."/>
            <person name="Wada C."/>
            <person name="Yamagata S."/>
            <person name="Horiuchi T."/>
        </authorList>
    </citation>
    <scope>NUCLEOTIDE SEQUENCE [LARGE SCALE GENOMIC DNA]</scope>
    <source>
        <strain>K12 / W3110 / ATCC 27325 / DSM 5911</strain>
    </source>
</reference>
<reference key="3">
    <citation type="journal article" date="1997" name="Science">
        <title>The complete genome sequence of Escherichia coli K-12.</title>
        <authorList>
            <person name="Blattner F.R."/>
            <person name="Plunkett G. III"/>
            <person name="Bloch C.A."/>
            <person name="Perna N.T."/>
            <person name="Burland V."/>
            <person name="Riley M."/>
            <person name="Collado-Vides J."/>
            <person name="Glasner J.D."/>
            <person name="Rode C.K."/>
            <person name="Mayhew G.F."/>
            <person name="Gregor J."/>
            <person name="Davis N.W."/>
            <person name="Kirkpatrick H.A."/>
            <person name="Goeden M.A."/>
            <person name="Rose D.J."/>
            <person name="Mau B."/>
            <person name="Shao Y."/>
        </authorList>
    </citation>
    <scope>NUCLEOTIDE SEQUENCE [LARGE SCALE GENOMIC DNA]</scope>
    <source>
        <strain>K12 / MG1655 / ATCC 47076</strain>
    </source>
</reference>
<reference key="4">
    <citation type="journal article" date="2006" name="Mol. Syst. Biol.">
        <title>Highly accurate genome sequences of Escherichia coli K-12 strains MG1655 and W3110.</title>
        <authorList>
            <person name="Hayashi K."/>
            <person name="Morooka N."/>
            <person name="Yamamoto Y."/>
            <person name="Fujita K."/>
            <person name="Isono K."/>
            <person name="Choi S."/>
            <person name="Ohtsubo E."/>
            <person name="Baba T."/>
            <person name="Wanner B.L."/>
            <person name="Mori H."/>
            <person name="Horiuchi T."/>
        </authorList>
    </citation>
    <scope>NUCLEOTIDE SEQUENCE [LARGE SCALE GENOMIC DNA]</scope>
    <source>
        <strain>K12 / W3110 / ATCC 27325 / DSM 5911</strain>
    </source>
</reference>
<sequence>MKKHLLTLTLSSILAIPVVSHAEFKGGFADIGVHYLDWTSRTTEKSSTKSHKDDFGYLEFEGGANFSWGEMYGFFDWENFYNGRHNKPGSEQRYTFKNTNRIYLGDTGFNLYLHAYGTYGSANRVNFHDDMFLYGIGYNFTGSGWWFKPFFAKRYTDQTYYTGDNGYVAGWVAGYNFMLGSEKFTLTNWNEYEFDRDATYAAGNGGKEGLNGAVALWWNATSHITTGIQYRYADDKLGEDFYQDAIIYSIKFNF</sequence>
<organism>
    <name type="scientific">Escherichia coli (strain K12)</name>
    <dbReference type="NCBI Taxonomy" id="83333"/>
    <lineage>
        <taxon>Bacteria</taxon>
        <taxon>Pseudomonadati</taxon>
        <taxon>Pseudomonadota</taxon>
        <taxon>Gammaproteobacteria</taxon>
        <taxon>Enterobacterales</taxon>
        <taxon>Enterobacteriaceae</taxon>
        <taxon>Escherichia</taxon>
    </lineage>
</organism>
<dbReference type="EMBL" id="X73828">
    <property type="protein sequence ID" value="CAA52046.1"/>
    <property type="molecule type" value="Genomic_DNA"/>
</dbReference>
<dbReference type="EMBL" id="U00096">
    <property type="protein sequence ID" value="AAC75461.1"/>
    <property type="molecule type" value="Genomic_DNA"/>
</dbReference>
<dbReference type="EMBL" id="AP009048">
    <property type="protein sequence ID" value="BAA16279.1"/>
    <property type="molecule type" value="Genomic_DNA"/>
</dbReference>
<dbReference type="PIR" id="G65014">
    <property type="entry name" value="G65014"/>
</dbReference>
<dbReference type="RefSeq" id="NP_416903.1">
    <property type="nucleotide sequence ID" value="NC_000913.3"/>
</dbReference>
<dbReference type="RefSeq" id="WP_000716421.1">
    <property type="nucleotide sequence ID" value="NZ_STEB01000039.1"/>
</dbReference>
<dbReference type="BioGRID" id="4260566">
    <property type="interactions" value="128"/>
</dbReference>
<dbReference type="FunCoup" id="P45564">
    <property type="interactions" value="186"/>
</dbReference>
<dbReference type="STRING" id="511145.b2408"/>
<dbReference type="TCDB" id="1.B.10.3.1">
    <property type="family name" value="the nucleoside-specific channel-forming outer membrane porin (tsx) family"/>
</dbReference>
<dbReference type="PaxDb" id="511145-b2408"/>
<dbReference type="EnsemblBacteria" id="AAC75461">
    <property type="protein sequence ID" value="AAC75461"/>
    <property type="gene ID" value="b2408"/>
</dbReference>
<dbReference type="GeneID" id="946872"/>
<dbReference type="KEGG" id="ecj:JW2399"/>
<dbReference type="KEGG" id="eco:b2408"/>
<dbReference type="KEGG" id="ecoc:C3026_13385"/>
<dbReference type="PATRIC" id="fig|1411691.4.peg.4324"/>
<dbReference type="EchoBASE" id="EB2952"/>
<dbReference type="eggNOG" id="ENOG502Z8EW">
    <property type="taxonomic scope" value="Bacteria"/>
</dbReference>
<dbReference type="HOGENOM" id="CLU_075268_0_0_6"/>
<dbReference type="InParanoid" id="P45564"/>
<dbReference type="OMA" id="WGELYGF"/>
<dbReference type="OrthoDB" id="6474234at2"/>
<dbReference type="PhylomeDB" id="P45564"/>
<dbReference type="BioCyc" id="EcoCyc:G7256-MONOMER"/>
<dbReference type="PRO" id="PR:P45564"/>
<dbReference type="Proteomes" id="UP000000625">
    <property type="component" value="Chromosome"/>
</dbReference>
<dbReference type="GO" id="GO:0009279">
    <property type="term" value="C:cell outer membrane"/>
    <property type="evidence" value="ECO:0007669"/>
    <property type="project" value="InterPro"/>
</dbReference>
<dbReference type="InterPro" id="IPR018013">
    <property type="entry name" value="Channel_Tsx-like"/>
</dbReference>
<dbReference type="InterPro" id="IPR036777">
    <property type="entry name" value="Channel_Tsx-like_sf"/>
</dbReference>
<dbReference type="NCBIfam" id="NF008574">
    <property type="entry name" value="PRK11528.1"/>
    <property type="match status" value="1"/>
</dbReference>
<dbReference type="Pfam" id="PF03502">
    <property type="entry name" value="Channel_Tsx"/>
    <property type="match status" value="1"/>
</dbReference>
<dbReference type="SUPFAM" id="SSF111364">
    <property type="entry name" value="Tsx-like channel"/>
    <property type="match status" value="1"/>
</dbReference>
<name>YFEN_ECOLI</name>
<feature type="chain" id="PRO_0000169224" description="Uncharacterized protein YfeN">
    <location>
        <begin position="1"/>
        <end position="254"/>
    </location>
</feature>
<proteinExistence type="inferred from homology"/>
<evidence type="ECO:0000305" key="1"/>
<gene>
    <name type="primary">yfeN</name>
    <name type="ordered locus">b2408</name>
    <name type="ordered locus">JW2399</name>
</gene>